<gene>
    <name type="primary">bst1</name>
    <name type="ORF">ATEG_06380</name>
</gene>
<accession>Q0CIV4</accession>
<dbReference type="EC" id="3.1.-.-"/>
<dbReference type="EMBL" id="CH476602">
    <property type="protein sequence ID" value="EAU32924.1"/>
    <property type="status" value="ALT_SEQ"/>
    <property type="molecule type" value="Genomic_DNA"/>
</dbReference>
<dbReference type="RefSeq" id="XP_001215558.1">
    <property type="nucleotide sequence ID" value="XM_001215558.1"/>
</dbReference>
<dbReference type="SMR" id="Q0CIV4"/>
<dbReference type="STRING" id="341663.Q0CIV4"/>
<dbReference type="ESTHER" id="asptn-bst1">
    <property type="family name" value="PGAP1"/>
</dbReference>
<dbReference type="GlyCosmos" id="Q0CIV4">
    <property type="glycosylation" value="3 sites, No reported glycans"/>
</dbReference>
<dbReference type="EnsemblFungi" id="EAU32924">
    <property type="protein sequence ID" value="EAU32924"/>
    <property type="gene ID" value="ATEG_06380"/>
</dbReference>
<dbReference type="GeneID" id="4322443"/>
<dbReference type="eggNOG" id="KOG3724">
    <property type="taxonomic scope" value="Eukaryota"/>
</dbReference>
<dbReference type="OrthoDB" id="348976at2759"/>
<dbReference type="Proteomes" id="UP000007963">
    <property type="component" value="Unassembled WGS sequence"/>
</dbReference>
<dbReference type="GO" id="GO:0005789">
    <property type="term" value="C:endoplasmic reticulum membrane"/>
    <property type="evidence" value="ECO:0007669"/>
    <property type="project" value="UniProtKB-SubCell"/>
</dbReference>
<dbReference type="GO" id="GO:0050185">
    <property type="term" value="F:phosphatidylinositol deacylase activity"/>
    <property type="evidence" value="ECO:0007669"/>
    <property type="project" value="TreeGrafter"/>
</dbReference>
<dbReference type="GO" id="GO:0006888">
    <property type="term" value="P:endoplasmic reticulum to Golgi vesicle-mediated transport"/>
    <property type="evidence" value="ECO:0007669"/>
    <property type="project" value="TreeGrafter"/>
</dbReference>
<dbReference type="GO" id="GO:0006505">
    <property type="term" value="P:GPI anchor metabolic process"/>
    <property type="evidence" value="ECO:0007669"/>
    <property type="project" value="TreeGrafter"/>
</dbReference>
<dbReference type="GO" id="GO:0015031">
    <property type="term" value="P:protein transport"/>
    <property type="evidence" value="ECO:0007669"/>
    <property type="project" value="UniProtKB-KW"/>
</dbReference>
<dbReference type="FunFam" id="3.40.50.1820:FF:000056">
    <property type="entry name" value="GPI inositol-deacylase"/>
    <property type="match status" value="1"/>
</dbReference>
<dbReference type="Gene3D" id="3.40.50.1820">
    <property type="entry name" value="alpha/beta hydrolase"/>
    <property type="match status" value="1"/>
</dbReference>
<dbReference type="InterPro" id="IPR029058">
    <property type="entry name" value="AB_hydrolase_fold"/>
</dbReference>
<dbReference type="InterPro" id="IPR012908">
    <property type="entry name" value="PGAP1-ab_dom-like"/>
</dbReference>
<dbReference type="InterPro" id="IPR039529">
    <property type="entry name" value="PGAP1/BST1"/>
</dbReference>
<dbReference type="InterPro" id="IPR056824">
    <property type="entry name" value="PGAP1_TMD"/>
</dbReference>
<dbReference type="PANTHER" id="PTHR15495:SF7">
    <property type="entry name" value="GPI INOSITOL-DEACYLASE"/>
    <property type="match status" value="1"/>
</dbReference>
<dbReference type="PANTHER" id="PTHR15495">
    <property type="entry name" value="NEGATIVE REGULATOR OF VESICLE FORMATION-RELATED"/>
    <property type="match status" value="1"/>
</dbReference>
<dbReference type="Pfam" id="PF07819">
    <property type="entry name" value="PGAP1"/>
    <property type="match status" value="1"/>
</dbReference>
<dbReference type="Pfam" id="PF25141">
    <property type="entry name" value="PGAP1_2nd"/>
    <property type="match status" value="1"/>
</dbReference>
<dbReference type="Pfam" id="PF25140">
    <property type="entry name" value="PGAP1_TMD"/>
    <property type="match status" value="1"/>
</dbReference>
<dbReference type="SUPFAM" id="SSF53474">
    <property type="entry name" value="alpha/beta-Hydrolases"/>
    <property type="match status" value="1"/>
</dbReference>
<dbReference type="PROSITE" id="PS00120">
    <property type="entry name" value="LIPASE_SER"/>
    <property type="match status" value="1"/>
</dbReference>
<evidence type="ECO:0000250" key="1"/>
<evidence type="ECO:0000255" key="2"/>
<evidence type="ECO:0000256" key="3">
    <source>
        <dbReference type="SAM" id="MobiDB-lite"/>
    </source>
</evidence>
<evidence type="ECO:0000305" key="4"/>
<proteinExistence type="inferred from homology"/>
<organism>
    <name type="scientific">Aspergillus terreus (strain NIH 2624 / FGSC A1156)</name>
    <dbReference type="NCBI Taxonomy" id="341663"/>
    <lineage>
        <taxon>Eukaryota</taxon>
        <taxon>Fungi</taxon>
        <taxon>Dikarya</taxon>
        <taxon>Ascomycota</taxon>
        <taxon>Pezizomycotina</taxon>
        <taxon>Eurotiomycetes</taxon>
        <taxon>Eurotiomycetidae</taxon>
        <taxon>Eurotiales</taxon>
        <taxon>Aspergillaceae</taxon>
        <taxon>Aspergillus</taxon>
        <taxon>Aspergillus subgen. Circumdati</taxon>
    </lineage>
</organism>
<sequence>MHRRSSGSPVEDDAEDPLISRTPSEPSGPNAVEPSERARPQVARTGTSFDLRRDHTGASTPRSRNSSTWRMPSSATTTLLPPDPRSSSAAMPLTSQRLLAEASPDAQSRSRPARLRSPWPCSILTALTSLLASLFLCAILRSFAARQTGGDGCGIPVMSPAFLHMAGFDTEHTRFASKYNLYLYREQGVDPFNHENLGLNGAPVLFLPGNAGSYRQVRSLAAEASRHYFEVVRHDQERLRSGTRSLDFFMIDFNEDMAAFHGQTLLDQAEYVNEAVAYILSLYHDPKRSRRDPELPDPSSVIIIGHSMGGIVARTTLTMSNYQANSVNTIITMSAPHAKPPVSFESDVVHTYKQINDYWREAYSQTWANNNPLWHVTLISIAGGSRDTVVPSDYASISSLVPETHGFTVFTSTIPDVWIGMDHLSITWCDQFRKAIIKSLFEIVDVRRASQTKPRAERMRVFKKWYLTGLEPIAERTLSQKEPNTLLTLEDQSNTILPQGQRLILRELGHRRSPNVHLLPVPPQGVAGKKFTLLTNQRFDKSGEQGTLEVLFCSVFPLQNGKFSTVFTMNMDFSGGNVGSTRLACKNAAEDAIHLPASTHFSKHPYDRAEPFSYLQYDLEDLAEHQFVAVVDKAQSPTKGWLLAEFSDSSDAVIRARLGLGGLLSAGLKMRLPANRPMLTEVKIPALYSSLLDYNLKIVRRNHGNQQELFTPLLRQSIPDPHESKFFVNVKDVNVNLHGVAPFMPPPLREQAAVGGVSFQLWTDPSCDSTVDISLHVDIASSLGELVMRYRTVFAAFPILVVALVLRKQFQVYDQTGYFITFTEGLDSALRSSLPMLLLAMSLLASSLATSSRLPPSDDPFHWPLNSTESPIDFTKNDLLLGSQDAFFWFLVPLFGLICVGVCVILNYIALALLSVLAFFYGIFKSKSGYIKRDDKRLVPGFHSTSVTVTNEASNLPIFSAPTPRKRMINTAILLLLVSTTIPYQFAYLVACIVHLATCVRAQWHAKETKSTTHYNFFNYTHSIFILMLWILPINILVLLVWAHNLVVHWFMPFSSHHNVLSIMPFILLVEAMTTGTMIPRVTTRFKYITSLILFSIAIYAAVYGVSYAYLLHHLANIFAAWLVGVYFFSSGFSVRRLWRVLEGDEGTSNSEPGSMKKKP</sequence>
<protein>
    <recommendedName>
        <fullName>GPI inositol-deacylase</fullName>
        <ecNumber>3.1.-.-</ecNumber>
    </recommendedName>
</protein>
<name>BST1_ASPTN</name>
<reference key="1">
    <citation type="submission" date="2005-09" db="EMBL/GenBank/DDBJ databases">
        <title>Annotation of the Aspergillus terreus NIH2624 genome.</title>
        <authorList>
            <person name="Birren B.W."/>
            <person name="Lander E.S."/>
            <person name="Galagan J.E."/>
            <person name="Nusbaum C."/>
            <person name="Devon K."/>
            <person name="Henn M."/>
            <person name="Ma L.-J."/>
            <person name="Jaffe D.B."/>
            <person name="Butler J."/>
            <person name="Alvarez P."/>
            <person name="Gnerre S."/>
            <person name="Grabherr M."/>
            <person name="Kleber M."/>
            <person name="Mauceli E.W."/>
            <person name="Brockman W."/>
            <person name="Rounsley S."/>
            <person name="Young S.K."/>
            <person name="LaButti K."/>
            <person name="Pushparaj V."/>
            <person name="DeCaprio D."/>
            <person name="Crawford M."/>
            <person name="Koehrsen M."/>
            <person name="Engels R."/>
            <person name="Montgomery P."/>
            <person name="Pearson M."/>
            <person name="Howarth C."/>
            <person name="Larson L."/>
            <person name="Luoma S."/>
            <person name="White J."/>
            <person name="Alvarado L."/>
            <person name="Kodira C.D."/>
            <person name="Zeng Q."/>
            <person name="Oleary S."/>
            <person name="Yandava C."/>
            <person name="Denning D.W."/>
            <person name="Nierman W.C."/>
            <person name="Milne T."/>
            <person name="Madden K."/>
        </authorList>
    </citation>
    <scope>NUCLEOTIDE SEQUENCE [LARGE SCALE GENOMIC DNA]</scope>
    <source>
        <strain>NIH 2624 / FGSC A1156</strain>
    </source>
</reference>
<feature type="chain" id="PRO_0000277631" description="GPI inositol-deacylase">
    <location>
        <begin position="1"/>
        <end position="1160"/>
    </location>
</feature>
<feature type="transmembrane region" description="Helical" evidence="2">
    <location>
        <begin position="120"/>
        <end position="140"/>
    </location>
</feature>
<feature type="transmembrane region" description="Helical" evidence="2">
    <location>
        <begin position="786"/>
        <end position="806"/>
    </location>
</feature>
<feature type="transmembrane region" description="Helical" evidence="2">
    <location>
        <begin position="832"/>
        <end position="852"/>
    </location>
</feature>
<feature type="transmembrane region" description="Helical" evidence="2">
    <location>
        <begin position="886"/>
        <end position="906"/>
    </location>
</feature>
<feature type="transmembrane region" description="Helical" evidence="2">
    <location>
        <begin position="973"/>
        <end position="993"/>
    </location>
</feature>
<feature type="transmembrane region" description="Helical" evidence="2">
    <location>
        <begin position="1023"/>
        <end position="1043"/>
    </location>
</feature>
<feature type="transmembrane region" description="Helical" evidence="2">
    <location>
        <begin position="1060"/>
        <end position="1080"/>
    </location>
</feature>
<feature type="transmembrane region" description="Helical" evidence="2">
    <location>
        <begin position="1092"/>
        <end position="1112"/>
    </location>
</feature>
<feature type="transmembrane region" description="Helical" evidence="2">
    <location>
        <begin position="1115"/>
        <end position="1135"/>
    </location>
</feature>
<feature type="region of interest" description="Disordered" evidence="3">
    <location>
        <begin position="1"/>
        <end position="92"/>
    </location>
</feature>
<feature type="compositionally biased region" description="Polar residues" evidence="3">
    <location>
        <begin position="57"/>
        <end position="92"/>
    </location>
</feature>
<feature type="active site" evidence="1">
    <location>
        <position position="307"/>
    </location>
</feature>
<feature type="glycosylation site" description="N-linked (GlcNAc...) asparagine" evidence="2">
    <location>
        <position position="65"/>
    </location>
</feature>
<feature type="glycosylation site" description="N-linked (GlcNAc...) asparagine" evidence="2">
    <location>
        <position position="866"/>
    </location>
</feature>
<feature type="glycosylation site" description="N-linked (GlcNAc...) asparagine" evidence="2">
    <location>
        <position position="1019"/>
    </location>
</feature>
<keyword id="KW-0256">Endoplasmic reticulum</keyword>
<keyword id="KW-0325">Glycoprotein</keyword>
<keyword id="KW-0378">Hydrolase</keyword>
<keyword id="KW-0472">Membrane</keyword>
<keyword id="KW-0653">Protein transport</keyword>
<keyword id="KW-1185">Reference proteome</keyword>
<keyword id="KW-0812">Transmembrane</keyword>
<keyword id="KW-1133">Transmembrane helix</keyword>
<keyword id="KW-0813">Transport</keyword>
<comment type="function">
    <text evidence="1">Involved in inositol deacylation of GPI-anchored proteins which plays important roles in the quality control and ER-associated degradation of GPI-anchored proteins.</text>
</comment>
<comment type="subcellular location">
    <subcellularLocation>
        <location evidence="1">Endoplasmic reticulum membrane</location>
        <topology evidence="1">Multi-pass membrane protein</topology>
    </subcellularLocation>
</comment>
<comment type="similarity">
    <text evidence="4">Belongs to the GPI inositol-deacylase family.</text>
</comment>
<comment type="sequence caution" evidence="4">
    <conflict type="erroneous gene model prediction">
        <sequence resource="EMBL-CDS" id="EAU32924"/>
    </conflict>
</comment>